<organism>
    <name type="scientific">Saccharomyces cerevisiae (strain ATCC 204508 / S288c)</name>
    <name type="common">Baker's yeast</name>
    <dbReference type="NCBI Taxonomy" id="559292"/>
    <lineage>
        <taxon>Eukaryota</taxon>
        <taxon>Fungi</taxon>
        <taxon>Dikarya</taxon>
        <taxon>Ascomycota</taxon>
        <taxon>Saccharomycotina</taxon>
        <taxon>Saccharomycetes</taxon>
        <taxon>Saccharomycetales</taxon>
        <taxon>Saccharomycetaceae</taxon>
        <taxon>Saccharomyces</taxon>
    </lineage>
</organism>
<gene>
    <name type="primary">CDC37</name>
    <name type="synonym">SMO1</name>
    <name type="ordered locus">YDR168W</name>
    <name type="ORF">YD9489.03</name>
</gene>
<keyword id="KW-0131">Cell cycle</keyword>
<keyword id="KW-0132">Cell division</keyword>
<keyword id="KW-0143">Chaperone</keyword>
<keyword id="KW-0963">Cytoplasm</keyword>
<keyword id="KW-0597">Phosphoprotein</keyword>
<keyword id="KW-1185">Reference proteome</keyword>
<name>CDC37_YEAST</name>
<proteinExistence type="evidence at protein level"/>
<comment type="function">
    <text evidence="6">Co-chaperone that binds to numerous kinases and promotes their interaction with the Hsp90 complex, resulting in stabilization and promotion of their activity. Involved in both the HOG and the PKC MAP kinase signaling cascade necessary for adaptation to stress conditions due to high osmolarity or cell wall perturbation.</text>
</comment>
<comment type="subunit">
    <text evidence="2 3 6 7">Forms a complex with Hsp90. Interacts with CDC28, CAK1 HOG1, SLT2 and STE11.</text>
</comment>
<comment type="interaction">
    <interactant intactId="EBI-4266">
        <id>P06101</id>
    </interactant>
    <interactant intactId="EBI-8659">
        <id>P02829</id>
        <label>HSP82</label>
    </interactant>
    <organismsDiffer>false</organismsDiffer>
    <experiments>3</experiments>
</comment>
<comment type="subcellular location">
    <subcellularLocation>
        <location evidence="4">Cytoplasm</location>
    </subcellularLocation>
</comment>
<comment type="PTM">
    <text evidence="6">Phosphorylation at Ser-14 is required for the interactions with HOG1 and SLT2 MAP kinases and is crucial for adaptation to stress conditions due to high osmolarity or cell wall perturbation.</text>
</comment>
<comment type="miscellaneous">
    <text evidence="5">Present with 10200 molecules/cell in log phase SD medium.</text>
</comment>
<comment type="similarity">
    <text evidence="8">Belongs to the CDC37 family.</text>
</comment>
<reference key="1">
    <citation type="journal article" date="1986" name="Nucleic Acids Res.">
        <title>Nucleotide sequence of the yeast cell division cycle start genes CDC28, CDC36, CDC37, and CDC39, and a structural analysis of the predicted products.</title>
        <authorList>
            <person name="Ferguson J."/>
            <person name="Ho J.-Y."/>
            <person name="Peterson T.A."/>
            <person name="Reed S.I."/>
        </authorList>
    </citation>
    <scope>NUCLEOTIDE SEQUENCE [GENOMIC DNA] OF 58-506</scope>
</reference>
<reference key="2">
    <citation type="journal article" date="1997" name="Nature">
        <title>The nucleotide sequence of Saccharomyces cerevisiae chromosome IV.</title>
        <authorList>
            <person name="Jacq C."/>
            <person name="Alt-Moerbe J."/>
            <person name="Andre B."/>
            <person name="Arnold W."/>
            <person name="Bahr A."/>
            <person name="Ballesta J.P.G."/>
            <person name="Bargues M."/>
            <person name="Baron L."/>
            <person name="Becker A."/>
            <person name="Biteau N."/>
            <person name="Bloecker H."/>
            <person name="Blugeon C."/>
            <person name="Boskovic J."/>
            <person name="Brandt P."/>
            <person name="Brueckner M."/>
            <person name="Buitrago M.J."/>
            <person name="Coster F."/>
            <person name="Delaveau T."/>
            <person name="del Rey F."/>
            <person name="Dujon B."/>
            <person name="Eide L.G."/>
            <person name="Garcia-Cantalejo J.M."/>
            <person name="Goffeau A."/>
            <person name="Gomez-Peris A."/>
            <person name="Granotier C."/>
            <person name="Hanemann V."/>
            <person name="Hankeln T."/>
            <person name="Hoheisel J.D."/>
            <person name="Jaeger W."/>
            <person name="Jimenez A."/>
            <person name="Jonniaux J.-L."/>
            <person name="Kraemer C."/>
            <person name="Kuester H."/>
            <person name="Laamanen P."/>
            <person name="Legros Y."/>
            <person name="Louis E.J."/>
            <person name="Moeller-Rieker S."/>
            <person name="Monnet A."/>
            <person name="Moro M."/>
            <person name="Mueller-Auer S."/>
            <person name="Nussbaumer B."/>
            <person name="Paricio N."/>
            <person name="Paulin L."/>
            <person name="Perea J."/>
            <person name="Perez-Alonso M."/>
            <person name="Perez-Ortin J.E."/>
            <person name="Pohl T.M."/>
            <person name="Prydz H."/>
            <person name="Purnelle B."/>
            <person name="Rasmussen S.W."/>
            <person name="Remacha M.A."/>
            <person name="Revuelta J.L."/>
            <person name="Rieger M."/>
            <person name="Salom D."/>
            <person name="Saluz H.P."/>
            <person name="Saiz J.E."/>
            <person name="Saren A.-M."/>
            <person name="Schaefer M."/>
            <person name="Scharfe M."/>
            <person name="Schmidt E.R."/>
            <person name="Schneider C."/>
            <person name="Scholler P."/>
            <person name="Schwarz S."/>
            <person name="Soler-Mira A."/>
            <person name="Urrestarazu L.A."/>
            <person name="Verhasselt P."/>
            <person name="Vissers S."/>
            <person name="Voet M."/>
            <person name="Volckaert G."/>
            <person name="Wagner G."/>
            <person name="Wambutt R."/>
            <person name="Wedler E."/>
            <person name="Wedler H."/>
            <person name="Woelfl S."/>
            <person name="Harris D.E."/>
            <person name="Bowman S."/>
            <person name="Brown D."/>
            <person name="Churcher C.M."/>
            <person name="Connor R."/>
            <person name="Dedman K."/>
            <person name="Gentles S."/>
            <person name="Hamlin N."/>
            <person name="Hunt S."/>
            <person name="Jones L."/>
            <person name="McDonald S."/>
            <person name="Murphy L.D."/>
            <person name="Niblett D."/>
            <person name="Odell C."/>
            <person name="Oliver K."/>
            <person name="Rajandream M.A."/>
            <person name="Richards C."/>
            <person name="Shore L."/>
            <person name="Walsh S.V."/>
            <person name="Barrell B.G."/>
            <person name="Dietrich F.S."/>
            <person name="Mulligan J.T."/>
            <person name="Allen E."/>
            <person name="Araujo R."/>
            <person name="Aviles E."/>
            <person name="Berno A."/>
            <person name="Carpenter J."/>
            <person name="Chen E."/>
            <person name="Cherry J.M."/>
            <person name="Chung E."/>
            <person name="Duncan M."/>
            <person name="Hunicke-Smith S."/>
            <person name="Hyman R.W."/>
            <person name="Komp C."/>
            <person name="Lashkari D."/>
            <person name="Lew H."/>
            <person name="Lin D."/>
            <person name="Mosedale D."/>
            <person name="Nakahara K."/>
            <person name="Namath A."/>
            <person name="Oefner P."/>
            <person name="Oh C."/>
            <person name="Petel F.X."/>
            <person name="Roberts D."/>
            <person name="Schramm S."/>
            <person name="Schroeder M."/>
            <person name="Shogren T."/>
            <person name="Shroff N."/>
            <person name="Winant A."/>
            <person name="Yelton M.A."/>
            <person name="Botstein D."/>
            <person name="Davis R.W."/>
            <person name="Johnston M."/>
            <person name="Andrews S."/>
            <person name="Brinkman R."/>
            <person name="Cooper J."/>
            <person name="Ding H."/>
            <person name="Du Z."/>
            <person name="Favello A."/>
            <person name="Fulton L."/>
            <person name="Gattung S."/>
            <person name="Greco T."/>
            <person name="Hallsworth K."/>
            <person name="Hawkins J."/>
            <person name="Hillier L.W."/>
            <person name="Jier M."/>
            <person name="Johnson D."/>
            <person name="Johnston L."/>
            <person name="Kirsten J."/>
            <person name="Kucaba T."/>
            <person name="Langston Y."/>
            <person name="Latreille P."/>
            <person name="Le T."/>
            <person name="Mardis E."/>
            <person name="Menezes S."/>
            <person name="Miller N."/>
            <person name="Nhan M."/>
            <person name="Pauley A."/>
            <person name="Peluso D."/>
            <person name="Rifkin L."/>
            <person name="Riles L."/>
            <person name="Taich A."/>
            <person name="Trevaskis E."/>
            <person name="Vignati D."/>
            <person name="Wilcox L."/>
            <person name="Wohldman P."/>
            <person name="Vaudin M."/>
            <person name="Wilson R."/>
            <person name="Waterston R."/>
            <person name="Albermann K."/>
            <person name="Hani J."/>
            <person name="Heumann K."/>
            <person name="Kleine K."/>
            <person name="Mewes H.-W."/>
            <person name="Zollner A."/>
            <person name="Zaccaria P."/>
        </authorList>
    </citation>
    <scope>NUCLEOTIDE SEQUENCE [LARGE SCALE GENOMIC DNA]</scope>
    <source>
        <strain>ATCC 204508 / S288c</strain>
    </source>
</reference>
<reference key="3">
    <citation type="journal article" date="2014" name="G3 (Bethesda)">
        <title>The reference genome sequence of Saccharomyces cerevisiae: Then and now.</title>
        <authorList>
            <person name="Engel S.R."/>
            <person name="Dietrich F.S."/>
            <person name="Fisk D.G."/>
            <person name="Binkley G."/>
            <person name="Balakrishnan R."/>
            <person name="Costanzo M.C."/>
            <person name="Dwight S.S."/>
            <person name="Hitz B.C."/>
            <person name="Karra K."/>
            <person name="Nash R.S."/>
            <person name="Weng S."/>
            <person name="Wong E.D."/>
            <person name="Lloyd P."/>
            <person name="Skrzypek M.S."/>
            <person name="Miyasato S.R."/>
            <person name="Simison M."/>
            <person name="Cherry J.M."/>
        </authorList>
    </citation>
    <scope>GENOME REANNOTATION</scope>
    <source>
        <strain>ATCC 204508 / S288c</strain>
    </source>
</reference>
<reference key="4">
    <citation type="journal article" date="1995" name="Proc. Natl. Acad. Sci. U.S.A.">
        <title>Cdc37 is required for association of the protein kinase Cdc28 with G1 and mitotic cyclins.</title>
        <authorList>
            <person name="Gerber M.R."/>
            <person name="Farrell A."/>
            <person name="Deshaies R.J."/>
            <person name="Herskowitz I."/>
            <person name="Morgan D.O."/>
        </authorList>
    </citation>
    <scope>INTERACTION WITH CDC28</scope>
</reference>
<reference key="5">
    <citation type="journal article" date="2000" name="FEBS Lett.">
        <title>The molecular chaperone Cdc37 is required for Ste11 function and pheromone-induced cell cycle arrest.</title>
        <authorList>
            <person name="Abbas-Terki T."/>
            <person name="Donze O."/>
            <person name="Picard D."/>
        </authorList>
    </citation>
    <scope>INTERACTION WITH STE11</scope>
</reference>
<reference key="6">
    <citation type="journal article" date="2000" name="Mol. Cell. Biol.">
        <title>Cdc37 promotes the stability of protein kinases Cdc28 and Cak1.</title>
        <authorList>
            <person name="Farrell A."/>
            <person name="Morgan D.O."/>
        </authorList>
    </citation>
    <scope>INTERACTION WITH CDC28 AND CAK1</scope>
</reference>
<reference key="7">
    <citation type="journal article" date="2003" name="Nature">
        <title>Global analysis of protein localization in budding yeast.</title>
        <authorList>
            <person name="Huh W.-K."/>
            <person name="Falvo J.V."/>
            <person name="Gerke L.C."/>
            <person name="Carroll A.S."/>
            <person name="Howson R.W."/>
            <person name="Weissman J.S."/>
            <person name="O'Shea E.K."/>
        </authorList>
    </citation>
    <scope>SUBCELLULAR LOCATION [LARGE SCALE ANALYSIS]</scope>
</reference>
<reference key="8">
    <citation type="journal article" date="2003" name="Nature">
        <title>Global analysis of protein expression in yeast.</title>
        <authorList>
            <person name="Ghaemmaghami S."/>
            <person name="Huh W.-K."/>
            <person name="Bower K."/>
            <person name="Howson R.W."/>
            <person name="Belle A."/>
            <person name="Dephoure N."/>
            <person name="O'Shea E.K."/>
            <person name="Weissman J.S."/>
        </authorList>
    </citation>
    <scope>LEVEL OF PROTEIN EXPRESSION [LARGE SCALE ANALYSIS]</scope>
</reference>
<reference key="9">
    <citation type="journal article" date="2007" name="Eukaryot. Cell">
        <title>Cdc37p is required for stress-induced high-osmolarity glycerol and protein kinase C mitogen-activated protein kinase pathway functionality by interaction with Hog1p and Slt2p (Mpk1p).</title>
        <authorList>
            <person name="Hawle P."/>
            <person name="Horst D."/>
            <person name="Bebelman J.-P."/>
            <person name="Yang X.X."/>
            <person name="Siderius M."/>
            <person name="van der Vies S.M."/>
        </authorList>
    </citation>
    <scope>FUNCTION</scope>
    <scope>INTERACTION WITH HOG1; HSP90 AND SLT2</scope>
    <scope>PHOSPHORYLATION AT SER-14</scope>
    <scope>MUTAGENESIS OF SER-14</scope>
</reference>
<reference key="10">
    <citation type="journal article" date="2007" name="J. Proteome Res.">
        <title>Large-scale phosphorylation analysis of alpha-factor-arrested Saccharomyces cerevisiae.</title>
        <authorList>
            <person name="Li X."/>
            <person name="Gerber S.A."/>
            <person name="Rudner A.D."/>
            <person name="Beausoleil S.A."/>
            <person name="Haas W."/>
            <person name="Villen J."/>
            <person name="Elias J.E."/>
            <person name="Gygi S.P."/>
        </authorList>
    </citation>
    <scope>PHOSPHORYLATION [LARGE SCALE ANALYSIS] AT SER-14 AND SER-17</scope>
    <scope>IDENTIFICATION BY MASS SPECTROMETRY [LARGE SCALE ANALYSIS]</scope>
    <source>
        <strain>ADR376</strain>
    </source>
</reference>
<reference key="11">
    <citation type="journal article" date="2007" name="Proc. Natl. Acad. Sci. U.S.A.">
        <title>Analysis of phosphorylation sites on proteins from Saccharomyces cerevisiae by electron transfer dissociation (ETD) mass spectrometry.</title>
        <authorList>
            <person name="Chi A."/>
            <person name="Huttenhower C."/>
            <person name="Geer L.Y."/>
            <person name="Coon J.J."/>
            <person name="Syka J.E.P."/>
            <person name="Bai D.L."/>
            <person name="Shabanowitz J."/>
            <person name="Burke D.J."/>
            <person name="Troyanskaya O.G."/>
            <person name="Hunt D.F."/>
        </authorList>
    </citation>
    <scope>PHOSPHORYLATION [LARGE SCALE ANALYSIS] AT SER-14 AND SER-17</scope>
    <scope>IDENTIFICATION BY MASS SPECTROMETRY [LARGE SCALE ANALYSIS]</scope>
</reference>
<reference key="12">
    <citation type="journal article" date="2008" name="Mol. Cell. Proteomics">
        <title>A multidimensional chromatography technology for in-depth phosphoproteome analysis.</title>
        <authorList>
            <person name="Albuquerque C.P."/>
            <person name="Smolka M.B."/>
            <person name="Payne S.H."/>
            <person name="Bafna V."/>
            <person name="Eng J."/>
            <person name="Zhou H."/>
        </authorList>
    </citation>
    <scope>PHOSPHORYLATION [LARGE SCALE ANALYSIS] AT SER-14; SER-17; SER-367; SER-466 AND SER-484</scope>
    <scope>IDENTIFICATION BY MASS SPECTROMETRY [LARGE SCALE ANALYSIS]</scope>
</reference>
<reference key="13">
    <citation type="journal article" date="2009" name="Science">
        <title>Global analysis of Cdk1 substrate phosphorylation sites provides insights into evolution.</title>
        <authorList>
            <person name="Holt L.J."/>
            <person name="Tuch B.B."/>
            <person name="Villen J."/>
            <person name="Johnson A.D."/>
            <person name="Gygi S.P."/>
            <person name="Morgan D.O."/>
        </authorList>
    </citation>
    <scope>PHOSPHORYLATION [LARGE SCALE ANALYSIS] AT SER-14; SER-17; SER-367 AND SER-484</scope>
    <scope>IDENTIFICATION BY MASS SPECTROMETRY [LARGE SCALE ANALYSIS]</scope>
</reference>
<dbReference type="EMBL" id="X04288">
    <property type="protein sequence ID" value="CAA27836.1"/>
    <property type="molecule type" value="Genomic_DNA"/>
</dbReference>
<dbReference type="EMBL" id="Z47813">
    <property type="protein sequence ID" value="CAA87799.1"/>
    <property type="molecule type" value="Genomic_DNA"/>
</dbReference>
<dbReference type="EMBL" id="BK006938">
    <property type="protein sequence ID" value="DAA12008.1"/>
    <property type="molecule type" value="Genomic_DNA"/>
</dbReference>
<dbReference type="PIR" id="S50914">
    <property type="entry name" value="S50914"/>
</dbReference>
<dbReference type="RefSeq" id="NP_010452.1">
    <property type="nucleotide sequence ID" value="NM_001180475.1"/>
</dbReference>
<dbReference type="BioGRID" id="32219">
    <property type="interactions" value="742"/>
</dbReference>
<dbReference type="DIP" id="DIP-2379N"/>
<dbReference type="FunCoup" id="P06101">
    <property type="interactions" value="516"/>
</dbReference>
<dbReference type="IntAct" id="P06101">
    <property type="interactions" value="11"/>
</dbReference>
<dbReference type="MINT" id="P06101"/>
<dbReference type="STRING" id="4932.YDR168W"/>
<dbReference type="GlyGen" id="P06101">
    <property type="glycosylation" value="1 site"/>
</dbReference>
<dbReference type="iPTMnet" id="P06101"/>
<dbReference type="PaxDb" id="4932-YDR168W"/>
<dbReference type="PeptideAtlas" id="P06101"/>
<dbReference type="EnsemblFungi" id="YDR168W_mRNA">
    <property type="protein sequence ID" value="YDR168W"/>
    <property type="gene ID" value="YDR168W"/>
</dbReference>
<dbReference type="GeneID" id="851746"/>
<dbReference type="KEGG" id="sce:YDR168W"/>
<dbReference type="AGR" id="SGD:S000002575"/>
<dbReference type="SGD" id="S000002575">
    <property type="gene designation" value="CDC37"/>
</dbReference>
<dbReference type="VEuPathDB" id="FungiDB:YDR168W"/>
<dbReference type="eggNOG" id="KOG2260">
    <property type="taxonomic scope" value="Eukaryota"/>
</dbReference>
<dbReference type="GeneTree" id="ENSGT00390000013443"/>
<dbReference type="HOGENOM" id="CLU_033261_1_0_1"/>
<dbReference type="InParanoid" id="P06101"/>
<dbReference type="OMA" id="NYSKWDQ"/>
<dbReference type="OrthoDB" id="440202at2759"/>
<dbReference type="BioCyc" id="YEAST:G3O-29757-MONOMER"/>
<dbReference type="Reactome" id="R-SCE-114608">
    <property type="pathway name" value="Platelet degranulation"/>
</dbReference>
<dbReference type="BioGRID-ORCS" id="851746">
    <property type="hits" value="0 hits in 10 CRISPR screens"/>
</dbReference>
<dbReference type="PRO" id="PR:P06101"/>
<dbReference type="Proteomes" id="UP000002311">
    <property type="component" value="Chromosome IV"/>
</dbReference>
<dbReference type="RNAct" id="P06101">
    <property type="molecule type" value="protein"/>
</dbReference>
<dbReference type="GO" id="GO:0005737">
    <property type="term" value="C:cytoplasm"/>
    <property type="evidence" value="ECO:0007005"/>
    <property type="project" value="SGD"/>
</dbReference>
<dbReference type="GO" id="GO:0031072">
    <property type="term" value="F:heat shock protein binding"/>
    <property type="evidence" value="ECO:0000318"/>
    <property type="project" value="GO_Central"/>
</dbReference>
<dbReference type="GO" id="GO:0019901">
    <property type="term" value="F:protein kinase binding"/>
    <property type="evidence" value="ECO:0007669"/>
    <property type="project" value="InterPro"/>
</dbReference>
<dbReference type="GO" id="GO:0051087">
    <property type="term" value="F:protein-folding chaperone binding"/>
    <property type="evidence" value="ECO:0000318"/>
    <property type="project" value="GO_Central"/>
</dbReference>
<dbReference type="GO" id="GO:0051082">
    <property type="term" value="F:unfolded protein binding"/>
    <property type="evidence" value="ECO:0000314"/>
    <property type="project" value="SGD"/>
</dbReference>
<dbReference type="GO" id="GO:0051301">
    <property type="term" value="P:cell division"/>
    <property type="evidence" value="ECO:0007669"/>
    <property type="project" value="UniProtKB-KW"/>
</dbReference>
<dbReference type="GO" id="GO:0071474">
    <property type="term" value="P:cellular hyperosmotic response"/>
    <property type="evidence" value="ECO:0000315"/>
    <property type="project" value="SGD"/>
</dbReference>
<dbReference type="GO" id="GO:0071852">
    <property type="term" value="P:fungal-type cell wall organization or biogenesis"/>
    <property type="evidence" value="ECO:0000315"/>
    <property type="project" value="SGD"/>
</dbReference>
<dbReference type="GO" id="GO:0038066">
    <property type="term" value="P:p38MAPK cascade"/>
    <property type="evidence" value="ECO:0000353"/>
    <property type="project" value="SGD"/>
</dbReference>
<dbReference type="GO" id="GO:0043410">
    <property type="term" value="P:positive regulation of MAPK cascade"/>
    <property type="evidence" value="ECO:0000315"/>
    <property type="project" value="SGD"/>
</dbReference>
<dbReference type="GO" id="GO:0006457">
    <property type="term" value="P:protein folding"/>
    <property type="evidence" value="ECO:0000318"/>
    <property type="project" value="GO_Central"/>
</dbReference>
<dbReference type="GO" id="GO:0050821">
    <property type="term" value="P:protein stabilization"/>
    <property type="evidence" value="ECO:0000315"/>
    <property type="project" value="SGD"/>
</dbReference>
<dbReference type="GO" id="GO:0051726">
    <property type="term" value="P:regulation of cell cycle"/>
    <property type="evidence" value="ECO:0000315"/>
    <property type="project" value="SGD"/>
</dbReference>
<dbReference type="GO" id="GO:0030474">
    <property type="term" value="P:spindle pole body duplication"/>
    <property type="evidence" value="ECO:0000315"/>
    <property type="project" value="SGD"/>
</dbReference>
<dbReference type="FunFam" id="1.20.58.610:FF:000003">
    <property type="entry name" value="Cdc37p"/>
    <property type="match status" value="1"/>
</dbReference>
<dbReference type="Gene3D" id="1.20.58.610">
    <property type="entry name" value="Cdc37, Hsp90 binding domain"/>
    <property type="match status" value="1"/>
</dbReference>
<dbReference type="InterPro" id="IPR004918">
    <property type="entry name" value="Cdc37"/>
</dbReference>
<dbReference type="InterPro" id="IPR013873">
    <property type="entry name" value="Cdc37_C"/>
</dbReference>
<dbReference type="InterPro" id="IPR013874">
    <property type="entry name" value="Cdc37_Hsp90-bd"/>
</dbReference>
<dbReference type="InterPro" id="IPR038189">
    <property type="entry name" value="Cdc37_Hsp90-bd_sf"/>
</dbReference>
<dbReference type="InterPro" id="IPR013855">
    <property type="entry name" value="Cdc37_N_dom"/>
</dbReference>
<dbReference type="PANTHER" id="PTHR12800">
    <property type="entry name" value="CDC37-RELATED"/>
    <property type="match status" value="1"/>
</dbReference>
<dbReference type="PANTHER" id="PTHR12800:SF4">
    <property type="entry name" value="HSP90 CO-CHAPERONE CDC37"/>
    <property type="match status" value="1"/>
</dbReference>
<dbReference type="Pfam" id="PF08564">
    <property type="entry name" value="CDC37_C"/>
    <property type="match status" value="1"/>
</dbReference>
<dbReference type="Pfam" id="PF08565">
    <property type="entry name" value="CDC37_M"/>
    <property type="match status" value="1"/>
</dbReference>
<dbReference type="Pfam" id="PF03234">
    <property type="entry name" value="CDC37_N"/>
    <property type="match status" value="1"/>
</dbReference>
<dbReference type="SMART" id="SM01069">
    <property type="entry name" value="CDC37_C"/>
    <property type="match status" value="1"/>
</dbReference>
<dbReference type="SMART" id="SM01070">
    <property type="entry name" value="CDC37_M"/>
    <property type="match status" value="1"/>
</dbReference>
<dbReference type="SMART" id="SM01071">
    <property type="entry name" value="CDC37_N"/>
    <property type="match status" value="1"/>
</dbReference>
<dbReference type="SUPFAM" id="SSF101391">
    <property type="entry name" value="Hsp90 co-chaperone CDC37"/>
    <property type="match status" value="1"/>
</dbReference>
<protein>
    <recommendedName>
        <fullName>Hsp90 co-chaperone Cdc37</fullName>
    </recommendedName>
    <alternativeName>
        <fullName>Cell division control protein 37</fullName>
    </alternativeName>
    <alternativeName>
        <fullName>Hsp90 chaperone protein kinase-targeting subunit</fullName>
    </alternativeName>
</protein>
<accession>P06101</accession>
<accession>D6VSE8</accession>
<accession>Q04132</accession>
<feature type="chain" id="PRO_0000195067" description="Hsp90 co-chaperone Cdc37">
    <location>
        <begin position="1"/>
        <end position="506"/>
    </location>
</feature>
<feature type="region of interest" description="Disordered" evidence="1">
    <location>
        <begin position="472"/>
        <end position="506"/>
    </location>
</feature>
<feature type="compositionally biased region" description="Basic and acidic residues" evidence="1">
    <location>
        <begin position="486"/>
        <end position="506"/>
    </location>
</feature>
<feature type="modified residue" description="Phosphoserine" evidence="6 9 10 11 12">
    <location>
        <position position="14"/>
    </location>
</feature>
<feature type="modified residue" description="Phosphoserine" evidence="9 10 11 12">
    <location>
        <position position="17"/>
    </location>
</feature>
<feature type="modified residue" description="Phosphoserine" evidence="11 12">
    <location>
        <position position="367"/>
    </location>
</feature>
<feature type="modified residue" description="Phosphoserine" evidence="11">
    <location>
        <position position="466"/>
    </location>
</feature>
<feature type="modified residue" description="Phosphoserine" evidence="11 12">
    <location>
        <position position="484"/>
    </location>
</feature>
<feature type="mutagenesis site" description="Leads to osmosensitivity." evidence="6">
    <original>S</original>
    <variation>A</variation>
    <location>
        <position position="14"/>
    </location>
</feature>
<feature type="sequence conflict" description="In Ref. 1; CAA27836." evidence="8" ref="1">
    <original>A</original>
    <variation>D</variation>
    <location>
        <position position="169"/>
    </location>
</feature>
<evidence type="ECO:0000256" key="1">
    <source>
        <dbReference type="SAM" id="MobiDB-lite"/>
    </source>
</evidence>
<evidence type="ECO:0000269" key="2">
    <source>
    </source>
</evidence>
<evidence type="ECO:0000269" key="3">
    <source>
    </source>
</evidence>
<evidence type="ECO:0000269" key="4">
    <source>
    </source>
</evidence>
<evidence type="ECO:0000269" key="5">
    <source>
    </source>
</evidence>
<evidence type="ECO:0000269" key="6">
    <source>
    </source>
</evidence>
<evidence type="ECO:0000269" key="7">
    <source>
    </source>
</evidence>
<evidence type="ECO:0000305" key="8"/>
<evidence type="ECO:0007744" key="9">
    <source>
    </source>
</evidence>
<evidence type="ECO:0007744" key="10">
    <source>
    </source>
</evidence>
<evidence type="ECO:0007744" key="11">
    <source>
    </source>
</evidence>
<evidence type="ECO:0007744" key="12">
    <source>
    </source>
</evidence>
<sequence length="506" mass="58385">MAIDYSKWDKIELSDDSDVEVHPNVDKKSFIKWKQQSIHEQRFKRNQDIKNLETQVDMYSHLNKRVDRILSNLPESSLTDLPAVTKFLNANFDKMEKSKGENVDPEIATYNEMVEDLFEQLAKDLDKEGKDSKSPSLIRDAILKHRAKIDSVTVEAKKKLDELYKEKNAHISSEDIHTGFDSSFMNKQKGGAKPLEATPSEALSSAAESNILNKLAKSSVPQTFIDFKDDPMKLAKETEEFGKISINEYSKSQKFLLEHLPIISEQQKDALMMKAFEYQLHGDDKMTLQVIHQSELMAYIKEIYDMKKIPYLNPMELSNVINMFFEKVIFNKDKPMGKESFLRSVQEKFLHIQKRSKILQQEEMDESNAEGVETIQLKSLDDSTELEVNLPDFNSKDPEEMKKVKVFKTLIPEKMQEAIMTKNLDNINKVFEDIPIEEAEKLLEVFNDIDIIGIKAILENEKDFQSLKDQYEQDHEDATMENLSLNDRDGGGDNHEEVKHTADTVD</sequence>